<comment type="function">
    <text evidence="1">Required for maturation of urease via the functional incorporation of the urease nickel metallocenter.</text>
</comment>
<comment type="subunit">
    <text evidence="1">UreD, UreF and UreG form a complex that acts as a GTP-hydrolysis-dependent molecular chaperone, activating the urease apoprotein by helping to assemble the nickel containing metallocenter of UreC. The UreE protein probably delivers the nickel.</text>
</comment>
<comment type="subcellular location">
    <subcellularLocation>
        <location evidence="1">Cytoplasm</location>
    </subcellularLocation>
</comment>
<comment type="similarity">
    <text evidence="1">Belongs to the UreD family.</text>
</comment>
<sequence length="280" mass="30775">MTAALPDLSFHPAWHAQLELAYARAGDATRPVTRRHAGPLRVQKHLYAEGPEVCQHILVHPPGGIAGGDSLAFDVRLGERAWAQLTSPGAAKWYRAACPSRQTLEIHLEPGATLEWLPQESIVFAGAQAELETRIQLRGDARLFYWDMVALGRPASGERFASGHFVAALDIRRDDRLLWHERQRIDGGDRLLDSPIGLAGHPVLATLVASGEIDTDLLQRCRALPCAGRGNLSQLPGGLLVARCLADEALHARAWLIELWRLLRPALLGREAVPPRIWST</sequence>
<dbReference type="EMBL" id="CP000744">
    <property type="protein sequence ID" value="ABR86377.1"/>
    <property type="molecule type" value="Genomic_DNA"/>
</dbReference>
<dbReference type="RefSeq" id="WP_003116109.1">
    <property type="nucleotide sequence ID" value="NC_009656.1"/>
</dbReference>
<dbReference type="SMR" id="A6VCX1"/>
<dbReference type="KEGG" id="pap:PSPA7_5585"/>
<dbReference type="HOGENOM" id="CLU_056339_0_0_6"/>
<dbReference type="Proteomes" id="UP000001582">
    <property type="component" value="Chromosome"/>
</dbReference>
<dbReference type="GO" id="GO:0005737">
    <property type="term" value="C:cytoplasm"/>
    <property type="evidence" value="ECO:0007669"/>
    <property type="project" value="UniProtKB-SubCell"/>
</dbReference>
<dbReference type="GO" id="GO:0016151">
    <property type="term" value="F:nickel cation binding"/>
    <property type="evidence" value="ECO:0007669"/>
    <property type="project" value="UniProtKB-UniRule"/>
</dbReference>
<dbReference type="HAMAP" id="MF_01384">
    <property type="entry name" value="UreD"/>
    <property type="match status" value="1"/>
</dbReference>
<dbReference type="InterPro" id="IPR002669">
    <property type="entry name" value="UreD"/>
</dbReference>
<dbReference type="PANTHER" id="PTHR33643">
    <property type="entry name" value="UREASE ACCESSORY PROTEIN D"/>
    <property type="match status" value="1"/>
</dbReference>
<dbReference type="PANTHER" id="PTHR33643:SF1">
    <property type="entry name" value="UREASE ACCESSORY PROTEIN D"/>
    <property type="match status" value="1"/>
</dbReference>
<dbReference type="Pfam" id="PF01774">
    <property type="entry name" value="UreD"/>
    <property type="match status" value="1"/>
</dbReference>
<keyword id="KW-0143">Chaperone</keyword>
<keyword id="KW-0963">Cytoplasm</keyword>
<keyword id="KW-0996">Nickel insertion</keyword>
<proteinExistence type="inferred from homology"/>
<gene>
    <name evidence="1" type="primary">ureD</name>
    <name type="ordered locus">PSPA7_5585</name>
</gene>
<evidence type="ECO:0000255" key="1">
    <source>
        <dbReference type="HAMAP-Rule" id="MF_01384"/>
    </source>
</evidence>
<organism>
    <name type="scientific">Pseudomonas paraeruginosa (strain DSM 24068 / PA7)</name>
    <name type="common">Pseudomonas aeruginosa (strain PA7)</name>
    <dbReference type="NCBI Taxonomy" id="381754"/>
    <lineage>
        <taxon>Bacteria</taxon>
        <taxon>Pseudomonadati</taxon>
        <taxon>Pseudomonadota</taxon>
        <taxon>Gammaproteobacteria</taxon>
        <taxon>Pseudomonadales</taxon>
        <taxon>Pseudomonadaceae</taxon>
        <taxon>Pseudomonas</taxon>
        <taxon>Pseudomonas paraeruginosa</taxon>
    </lineage>
</organism>
<accession>A6VCX1</accession>
<protein>
    <recommendedName>
        <fullName evidence="1">Urease accessory protein UreD</fullName>
    </recommendedName>
</protein>
<name>URED_PSEP7</name>
<reference key="1">
    <citation type="submission" date="2007-06" db="EMBL/GenBank/DDBJ databases">
        <authorList>
            <person name="Dodson R.J."/>
            <person name="Harkins D."/>
            <person name="Paulsen I.T."/>
        </authorList>
    </citation>
    <scope>NUCLEOTIDE SEQUENCE [LARGE SCALE GENOMIC DNA]</scope>
    <source>
        <strain>DSM 24068 / PA7</strain>
    </source>
</reference>
<feature type="chain" id="PRO_0000340483" description="Urease accessory protein UreD">
    <location>
        <begin position="1"/>
        <end position="280"/>
    </location>
</feature>